<dbReference type="EMBL" id="CP001336">
    <property type="protein sequence ID" value="ACL18285.1"/>
    <property type="molecule type" value="Genomic_DNA"/>
</dbReference>
<dbReference type="RefSeq" id="WP_005808209.1">
    <property type="nucleotide sequence ID" value="NC_011830.1"/>
</dbReference>
<dbReference type="SMR" id="B8FZK2"/>
<dbReference type="KEGG" id="dhd:Dhaf_0217"/>
<dbReference type="HOGENOM" id="CLU_123265_0_1_9"/>
<dbReference type="Proteomes" id="UP000007726">
    <property type="component" value="Chromosome"/>
</dbReference>
<dbReference type="GO" id="GO:1990904">
    <property type="term" value="C:ribonucleoprotein complex"/>
    <property type="evidence" value="ECO:0007669"/>
    <property type="project" value="UniProtKB-KW"/>
</dbReference>
<dbReference type="GO" id="GO:0005840">
    <property type="term" value="C:ribosome"/>
    <property type="evidence" value="ECO:0007669"/>
    <property type="project" value="UniProtKB-KW"/>
</dbReference>
<dbReference type="GO" id="GO:0019843">
    <property type="term" value="F:rRNA binding"/>
    <property type="evidence" value="ECO:0007669"/>
    <property type="project" value="UniProtKB-UniRule"/>
</dbReference>
<dbReference type="GO" id="GO:0003735">
    <property type="term" value="F:structural constituent of ribosome"/>
    <property type="evidence" value="ECO:0007669"/>
    <property type="project" value="InterPro"/>
</dbReference>
<dbReference type="GO" id="GO:0000027">
    <property type="term" value="P:ribosomal large subunit assembly"/>
    <property type="evidence" value="ECO:0007669"/>
    <property type="project" value="UniProtKB-UniRule"/>
</dbReference>
<dbReference type="GO" id="GO:0006412">
    <property type="term" value="P:translation"/>
    <property type="evidence" value="ECO:0007669"/>
    <property type="project" value="InterPro"/>
</dbReference>
<dbReference type="CDD" id="cd07026">
    <property type="entry name" value="Ribosomal_L20"/>
    <property type="match status" value="1"/>
</dbReference>
<dbReference type="FunFam" id="1.10.1900.20:FF:000001">
    <property type="entry name" value="50S ribosomal protein L20"/>
    <property type="match status" value="1"/>
</dbReference>
<dbReference type="Gene3D" id="6.10.160.10">
    <property type="match status" value="1"/>
</dbReference>
<dbReference type="Gene3D" id="1.10.1900.20">
    <property type="entry name" value="Ribosomal protein L20"/>
    <property type="match status" value="1"/>
</dbReference>
<dbReference type="HAMAP" id="MF_00382">
    <property type="entry name" value="Ribosomal_bL20"/>
    <property type="match status" value="1"/>
</dbReference>
<dbReference type="InterPro" id="IPR005813">
    <property type="entry name" value="Ribosomal_bL20"/>
</dbReference>
<dbReference type="InterPro" id="IPR049946">
    <property type="entry name" value="RIBOSOMAL_L20_CS"/>
</dbReference>
<dbReference type="InterPro" id="IPR035566">
    <property type="entry name" value="Ribosomal_protein_bL20_C"/>
</dbReference>
<dbReference type="NCBIfam" id="TIGR01032">
    <property type="entry name" value="rplT_bact"/>
    <property type="match status" value="1"/>
</dbReference>
<dbReference type="PANTHER" id="PTHR10986">
    <property type="entry name" value="39S RIBOSOMAL PROTEIN L20"/>
    <property type="match status" value="1"/>
</dbReference>
<dbReference type="Pfam" id="PF00453">
    <property type="entry name" value="Ribosomal_L20"/>
    <property type="match status" value="1"/>
</dbReference>
<dbReference type="PRINTS" id="PR00062">
    <property type="entry name" value="RIBOSOMALL20"/>
</dbReference>
<dbReference type="SUPFAM" id="SSF74731">
    <property type="entry name" value="Ribosomal protein L20"/>
    <property type="match status" value="1"/>
</dbReference>
<dbReference type="PROSITE" id="PS00937">
    <property type="entry name" value="RIBOSOMAL_L20"/>
    <property type="match status" value="1"/>
</dbReference>
<organism>
    <name type="scientific">Desulfitobacterium hafniense (strain DSM 10664 / DCB-2)</name>
    <dbReference type="NCBI Taxonomy" id="272564"/>
    <lineage>
        <taxon>Bacteria</taxon>
        <taxon>Bacillati</taxon>
        <taxon>Bacillota</taxon>
        <taxon>Clostridia</taxon>
        <taxon>Eubacteriales</taxon>
        <taxon>Desulfitobacteriaceae</taxon>
        <taxon>Desulfitobacterium</taxon>
    </lineage>
</organism>
<sequence length="120" mass="13425">MARVKRGVTKHQRHKKVLKLAKGFRGAKSKLYRPANEQVMKSLAYAYAHRRDKKGDFRKLWIARINAAARLNGLSYSRMMNGLKIAGVSVNRKMLADLAINDAAAFTELVNVAKAQVSAK</sequence>
<gene>
    <name evidence="1" type="primary">rplT</name>
    <name type="ordered locus">Dhaf_0217</name>
</gene>
<keyword id="KW-0687">Ribonucleoprotein</keyword>
<keyword id="KW-0689">Ribosomal protein</keyword>
<keyword id="KW-0694">RNA-binding</keyword>
<keyword id="KW-0699">rRNA-binding</keyword>
<feature type="chain" id="PRO_1000193955" description="Large ribosomal subunit protein bL20">
    <location>
        <begin position="1"/>
        <end position="120"/>
    </location>
</feature>
<proteinExistence type="inferred from homology"/>
<accession>B8FZK2</accession>
<comment type="function">
    <text evidence="1">Binds directly to 23S ribosomal RNA and is necessary for the in vitro assembly process of the 50S ribosomal subunit. It is not involved in the protein synthesizing functions of that subunit.</text>
</comment>
<comment type="similarity">
    <text evidence="1">Belongs to the bacterial ribosomal protein bL20 family.</text>
</comment>
<reference key="1">
    <citation type="journal article" date="2012" name="BMC Microbiol.">
        <title>Genome sequence of Desulfitobacterium hafniense DCB-2, a Gram-positive anaerobe capable of dehalogenation and metal reduction.</title>
        <authorList>
            <person name="Kim S.H."/>
            <person name="Harzman C."/>
            <person name="Davis J.K."/>
            <person name="Hutcheson R."/>
            <person name="Broderick J.B."/>
            <person name="Marsh T.L."/>
            <person name="Tiedje J.M."/>
        </authorList>
    </citation>
    <scope>NUCLEOTIDE SEQUENCE [LARGE SCALE GENOMIC DNA]</scope>
    <source>
        <strain>DSM 10664 / DCB-2</strain>
    </source>
</reference>
<evidence type="ECO:0000255" key="1">
    <source>
        <dbReference type="HAMAP-Rule" id="MF_00382"/>
    </source>
</evidence>
<evidence type="ECO:0000305" key="2"/>
<name>RL20_DESHD</name>
<protein>
    <recommendedName>
        <fullName evidence="1">Large ribosomal subunit protein bL20</fullName>
    </recommendedName>
    <alternativeName>
        <fullName evidence="2">50S ribosomal protein L20</fullName>
    </alternativeName>
</protein>